<keyword id="KW-0028">Amino-acid biosynthesis</keyword>
<keyword id="KW-0057">Aromatic amino acid biosynthesis</keyword>
<keyword id="KW-0170">Cobalt</keyword>
<keyword id="KW-0963">Cytoplasm</keyword>
<keyword id="KW-0456">Lyase</keyword>
<keyword id="KW-0479">Metal-binding</keyword>
<keyword id="KW-0520">NAD</keyword>
<keyword id="KW-0547">Nucleotide-binding</keyword>
<keyword id="KW-1185">Reference proteome</keyword>
<keyword id="KW-0862">Zinc</keyword>
<name>AROB_SYMTH</name>
<accession>Q67N10</accession>
<gene>
    <name evidence="1" type="primary">aroB</name>
    <name type="ordered locus">STH1948</name>
</gene>
<organism>
    <name type="scientific">Symbiobacterium thermophilum (strain DSM 24528 / JCM 14929 / IAM 14863 / T)</name>
    <dbReference type="NCBI Taxonomy" id="292459"/>
    <lineage>
        <taxon>Bacteria</taxon>
        <taxon>Bacillati</taxon>
        <taxon>Bacillota</taxon>
        <taxon>Clostridia</taxon>
        <taxon>Eubacteriales</taxon>
        <taxon>Symbiobacteriaceae</taxon>
        <taxon>Symbiobacterium</taxon>
    </lineage>
</organism>
<feature type="chain" id="PRO_0000231136" description="3-dehydroquinate synthase">
    <location>
        <begin position="1"/>
        <end position="358"/>
    </location>
</feature>
<feature type="binding site" evidence="1">
    <location>
        <begin position="102"/>
        <end position="106"/>
    </location>
    <ligand>
        <name>NAD(+)</name>
        <dbReference type="ChEBI" id="CHEBI:57540"/>
    </ligand>
</feature>
<feature type="binding site" evidence="1">
    <location>
        <begin position="126"/>
        <end position="127"/>
    </location>
    <ligand>
        <name>NAD(+)</name>
        <dbReference type="ChEBI" id="CHEBI:57540"/>
    </ligand>
</feature>
<feature type="binding site" evidence="1">
    <location>
        <position position="139"/>
    </location>
    <ligand>
        <name>NAD(+)</name>
        <dbReference type="ChEBI" id="CHEBI:57540"/>
    </ligand>
</feature>
<feature type="binding site" evidence="1">
    <location>
        <position position="148"/>
    </location>
    <ligand>
        <name>NAD(+)</name>
        <dbReference type="ChEBI" id="CHEBI:57540"/>
    </ligand>
</feature>
<feature type="binding site" evidence="1">
    <location>
        <position position="181"/>
    </location>
    <ligand>
        <name>Zn(2+)</name>
        <dbReference type="ChEBI" id="CHEBI:29105"/>
    </ligand>
</feature>
<feature type="binding site" evidence="1">
    <location>
        <position position="244"/>
    </location>
    <ligand>
        <name>Zn(2+)</name>
        <dbReference type="ChEBI" id="CHEBI:29105"/>
    </ligand>
</feature>
<feature type="binding site" evidence="1">
    <location>
        <position position="260"/>
    </location>
    <ligand>
        <name>Zn(2+)</name>
        <dbReference type="ChEBI" id="CHEBI:29105"/>
    </ligand>
</feature>
<proteinExistence type="inferred from homology"/>
<reference key="1">
    <citation type="journal article" date="2004" name="Nucleic Acids Res.">
        <title>Genome sequence of Symbiobacterium thermophilum, an uncultivable bacterium that depends on microbial commensalism.</title>
        <authorList>
            <person name="Ueda K."/>
            <person name="Yamashita A."/>
            <person name="Ishikawa J."/>
            <person name="Shimada M."/>
            <person name="Watsuji T."/>
            <person name="Morimura K."/>
            <person name="Ikeda H."/>
            <person name="Hattori M."/>
            <person name="Beppu T."/>
        </authorList>
    </citation>
    <scope>NUCLEOTIDE SEQUENCE [LARGE SCALE GENOMIC DNA]</scope>
    <source>
        <strain>DSM 24528 / JCM 14929 / IAM 14863 / T</strain>
    </source>
</reference>
<protein>
    <recommendedName>
        <fullName evidence="1">3-dehydroquinate synthase</fullName>
        <shortName evidence="1">DHQS</shortName>
        <ecNumber evidence="1">4.2.3.4</ecNumber>
    </recommendedName>
</protein>
<dbReference type="EC" id="4.2.3.4" evidence="1"/>
<dbReference type="EMBL" id="AP006840">
    <property type="protein sequence ID" value="BAD40933.1"/>
    <property type="molecule type" value="Genomic_DNA"/>
</dbReference>
<dbReference type="SMR" id="Q67N10"/>
<dbReference type="STRING" id="292459.STH1948"/>
<dbReference type="KEGG" id="sth:STH1948"/>
<dbReference type="eggNOG" id="COG0337">
    <property type="taxonomic scope" value="Bacteria"/>
</dbReference>
<dbReference type="HOGENOM" id="CLU_001201_0_2_9"/>
<dbReference type="OrthoDB" id="9806583at2"/>
<dbReference type="UniPathway" id="UPA00053">
    <property type="reaction ID" value="UER00085"/>
</dbReference>
<dbReference type="Proteomes" id="UP000000417">
    <property type="component" value="Chromosome"/>
</dbReference>
<dbReference type="GO" id="GO:0005737">
    <property type="term" value="C:cytoplasm"/>
    <property type="evidence" value="ECO:0007669"/>
    <property type="project" value="UniProtKB-SubCell"/>
</dbReference>
<dbReference type="GO" id="GO:0003856">
    <property type="term" value="F:3-dehydroquinate synthase activity"/>
    <property type="evidence" value="ECO:0007669"/>
    <property type="project" value="UniProtKB-UniRule"/>
</dbReference>
<dbReference type="GO" id="GO:0046872">
    <property type="term" value="F:metal ion binding"/>
    <property type="evidence" value="ECO:0007669"/>
    <property type="project" value="UniProtKB-KW"/>
</dbReference>
<dbReference type="GO" id="GO:0000166">
    <property type="term" value="F:nucleotide binding"/>
    <property type="evidence" value="ECO:0007669"/>
    <property type="project" value="UniProtKB-KW"/>
</dbReference>
<dbReference type="GO" id="GO:0008652">
    <property type="term" value="P:amino acid biosynthetic process"/>
    <property type="evidence" value="ECO:0007669"/>
    <property type="project" value="UniProtKB-KW"/>
</dbReference>
<dbReference type="GO" id="GO:0009073">
    <property type="term" value="P:aromatic amino acid family biosynthetic process"/>
    <property type="evidence" value="ECO:0007669"/>
    <property type="project" value="UniProtKB-KW"/>
</dbReference>
<dbReference type="GO" id="GO:0009423">
    <property type="term" value="P:chorismate biosynthetic process"/>
    <property type="evidence" value="ECO:0007669"/>
    <property type="project" value="UniProtKB-UniRule"/>
</dbReference>
<dbReference type="CDD" id="cd08195">
    <property type="entry name" value="DHQS"/>
    <property type="match status" value="1"/>
</dbReference>
<dbReference type="FunFam" id="3.40.50.1970:FF:000001">
    <property type="entry name" value="3-dehydroquinate synthase"/>
    <property type="match status" value="1"/>
</dbReference>
<dbReference type="Gene3D" id="3.40.50.1970">
    <property type="match status" value="1"/>
</dbReference>
<dbReference type="Gene3D" id="1.20.1090.10">
    <property type="entry name" value="Dehydroquinate synthase-like - alpha domain"/>
    <property type="match status" value="1"/>
</dbReference>
<dbReference type="HAMAP" id="MF_00110">
    <property type="entry name" value="DHQ_synthase"/>
    <property type="match status" value="1"/>
</dbReference>
<dbReference type="InterPro" id="IPR050071">
    <property type="entry name" value="Dehydroquinate_synthase"/>
</dbReference>
<dbReference type="InterPro" id="IPR016037">
    <property type="entry name" value="DHQ_synth_AroB"/>
</dbReference>
<dbReference type="InterPro" id="IPR030963">
    <property type="entry name" value="DHQ_synth_fam"/>
</dbReference>
<dbReference type="InterPro" id="IPR030960">
    <property type="entry name" value="DHQS/DOIS_N"/>
</dbReference>
<dbReference type="InterPro" id="IPR056179">
    <property type="entry name" value="DHQS_C"/>
</dbReference>
<dbReference type="NCBIfam" id="TIGR01357">
    <property type="entry name" value="aroB"/>
    <property type="match status" value="1"/>
</dbReference>
<dbReference type="PANTHER" id="PTHR43622">
    <property type="entry name" value="3-DEHYDROQUINATE SYNTHASE"/>
    <property type="match status" value="1"/>
</dbReference>
<dbReference type="PANTHER" id="PTHR43622:SF7">
    <property type="entry name" value="3-DEHYDROQUINATE SYNTHASE, CHLOROPLASTIC"/>
    <property type="match status" value="1"/>
</dbReference>
<dbReference type="Pfam" id="PF01761">
    <property type="entry name" value="DHQ_synthase"/>
    <property type="match status" value="1"/>
</dbReference>
<dbReference type="Pfam" id="PF24621">
    <property type="entry name" value="DHQS_C"/>
    <property type="match status" value="1"/>
</dbReference>
<dbReference type="PIRSF" id="PIRSF001455">
    <property type="entry name" value="DHQ_synth"/>
    <property type="match status" value="1"/>
</dbReference>
<dbReference type="SUPFAM" id="SSF56796">
    <property type="entry name" value="Dehydroquinate synthase-like"/>
    <property type="match status" value="1"/>
</dbReference>
<sequence length="358" mass="38345">MELGEERYPIYVGAGLMAQLGALVRRHLPETRRALLVTDANVAPLYGEAARAALEQAGITTARVTVPAGEASKSLSQAYSLYSSCVRAELDRTSAVVALGGGVVGDLAGFVAATYLRGIPLVQVPTTLLAQVDSSIGGKTGVDLPQGKNLVGAFHQPSLVVADVETLKSLPRRELSAGMAEVVKHGVIRDEEFLKYVEVQVGNVLAGDPAVLERVVAESCRIKAEVVAADPREKGLRAILNFGHTVGHALEAAIGFRWLHGECVAVGMVAAAHIARHSGIAQEGRLELRLTRLLERLDLPTTLPEGMDPKDLEPFLRRDKKIKSGVIHWVMPVRPGEVVVTPDVSPDAIRWGLEALRR</sequence>
<evidence type="ECO:0000255" key="1">
    <source>
        <dbReference type="HAMAP-Rule" id="MF_00110"/>
    </source>
</evidence>
<comment type="function">
    <text evidence="1">Catalyzes the conversion of 3-deoxy-D-arabino-heptulosonate 7-phosphate (DAHP) to dehydroquinate (DHQ).</text>
</comment>
<comment type="catalytic activity">
    <reaction evidence="1">
        <text>7-phospho-2-dehydro-3-deoxy-D-arabino-heptonate = 3-dehydroquinate + phosphate</text>
        <dbReference type="Rhea" id="RHEA:21968"/>
        <dbReference type="ChEBI" id="CHEBI:32364"/>
        <dbReference type="ChEBI" id="CHEBI:43474"/>
        <dbReference type="ChEBI" id="CHEBI:58394"/>
        <dbReference type="EC" id="4.2.3.4"/>
    </reaction>
</comment>
<comment type="cofactor">
    <cofactor evidence="1">
        <name>Co(2+)</name>
        <dbReference type="ChEBI" id="CHEBI:48828"/>
    </cofactor>
    <cofactor evidence="1">
        <name>Zn(2+)</name>
        <dbReference type="ChEBI" id="CHEBI:29105"/>
    </cofactor>
    <text evidence="1">Binds 1 divalent metal cation per subunit. Can use either Co(2+) or Zn(2+).</text>
</comment>
<comment type="cofactor">
    <cofactor evidence="1">
        <name>NAD(+)</name>
        <dbReference type="ChEBI" id="CHEBI:57540"/>
    </cofactor>
</comment>
<comment type="pathway">
    <text evidence="1">Metabolic intermediate biosynthesis; chorismate biosynthesis; chorismate from D-erythrose 4-phosphate and phosphoenolpyruvate: step 2/7.</text>
</comment>
<comment type="subcellular location">
    <subcellularLocation>
        <location evidence="1">Cytoplasm</location>
    </subcellularLocation>
</comment>
<comment type="similarity">
    <text evidence="1">Belongs to the sugar phosphate cyclases superfamily. Dehydroquinate synthase family.</text>
</comment>